<comment type="function">
    <text evidence="1">Thiol-specific peroxidase that catalyzes the reduction of hydrogen peroxide and organic hydroperoxides to water and alcohols, respectively. Plays a role in cell protection against oxidative stress by detoxifying peroxides and as sensor of hydrogen peroxide-mediated signaling events.</text>
</comment>
<comment type="catalytic activity">
    <reaction evidence="1">
        <text>a hydroperoxide + [thioredoxin]-dithiol = an alcohol + [thioredoxin]-disulfide + H2O</text>
        <dbReference type="Rhea" id="RHEA:62620"/>
        <dbReference type="Rhea" id="RHEA-COMP:10698"/>
        <dbReference type="Rhea" id="RHEA-COMP:10700"/>
        <dbReference type="ChEBI" id="CHEBI:15377"/>
        <dbReference type="ChEBI" id="CHEBI:29950"/>
        <dbReference type="ChEBI" id="CHEBI:30879"/>
        <dbReference type="ChEBI" id="CHEBI:35924"/>
        <dbReference type="ChEBI" id="CHEBI:50058"/>
        <dbReference type="EC" id="1.11.1.24"/>
    </reaction>
</comment>
<comment type="subunit">
    <text evidence="1">Monomer.</text>
</comment>
<comment type="miscellaneous">
    <text evidence="1">The active site is a conserved redox-active cysteine residue, the peroxidatic cysteine (C(P)), which makes the nucleophilic attack on the peroxide substrate. The peroxide oxidizes the C(P)-SH to cysteine sulfenic acid (C(P)-SOH), which then reacts with another cysteine residue, the resolving cysteine (C(R)), to form a disulfide bridge. The disulfide is subsequently reduced by an appropriate electron donor to complete the catalytic cycle. In this atypical 2-Cys peroxiredoxin, C(R) is present in the same subunit to form an intramolecular disulfide. The disulfide is subsequently reduced by thioredoxin.</text>
</comment>
<comment type="similarity">
    <text evidence="3">Belongs to the peroxiredoxin family. BCP/PrxQ subfamily.</text>
</comment>
<feature type="chain" id="PRO_0000135136" description="Putative peroxiredoxin bcp">
    <location>
        <begin position="1"/>
        <end position="156"/>
    </location>
</feature>
<feature type="domain" description="Thioredoxin" evidence="2">
    <location>
        <begin position="4"/>
        <end position="156"/>
    </location>
</feature>
<feature type="active site" description="Cysteine sulfenic acid (-SOH) intermediate" evidence="1">
    <location>
        <position position="46"/>
    </location>
</feature>
<feature type="disulfide bond" description="Redox-active" evidence="1">
    <location>
        <begin position="46"/>
        <end position="51"/>
    </location>
</feature>
<evidence type="ECO:0000250" key="1">
    <source>
        <dbReference type="UniProtKB" id="P0AE52"/>
    </source>
</evidence>
<evidence type="ECO:0000255" key="2">
    <source>
        <dbReference type="PROSITE-ProRule" id="PRU00691"/>
    </source>
</evidence>
<evidence type="ECO:0000305" key="3"/>
<dbReference type="EC" id="1.11.1.24" evidence="1"/>
<dbReference type="EMBL" id="AE014075">
    <property type="protein sequence ID" value="AAN81458.1"/>
    <property type="molecule type" value="Genomic_DNA"/>
</dbReference>
<dbReference type="RefSeq" id="WP_001068682.1">
    <property type="nucleotide sequence ID" value="NZ_CP051263.1"/>
</dbReference>
<dbReference type="SMR" id="P0AE53"/>
<dbReference type="STRING" id="199310.c3008"/>
<dbReference type="GeneID" id="93774658"/>
<dbReference type="KEGG" id="ecc:c3008"/>
<dbReference type="eggNOG" id="COG1225">
    <property type="taxonomic scope" value="Bacteria"/>
</dbReference>
<dbReference type="HOGENOM" id="CLU_042529_14_1_6"/>
<dbReference type="BioCyc" id="ECOL199310:C3008-MONOMER"/>
<dbReference type="Proteomes" id="UP000001410">
    <property type="component" value="Chromosome"/>
</dbReference>
<dbReference type="GO" id="GO:0005737">
    <property type="term" value="C:cytoplasm"/>
    <property type="evidence" value="ECO:0007669"/>
    <property type="project" value="TreeGrafter"/>
</dbReference>
<dbReference type="GO" id="GO:0008379">
    <property type="term" value="F:thioredoxin peroxidase activity"/>
    <property type="evidence" value="ECO:0007669"/>
    <property type="project" value="TreeGrafter"/>
</dbReference>
<dbReference type="GO" id="GO:0045454">
    <property type="term" value="P:cell redox homeostasis"/>
    <property type="evidence" value="ECO:0007669"/>
    <property type="project" value="TreeGrafter"/>
</dbReference>
<dbReference type="GO" id="GO:0034599">
    <property type="term" value="P:cellular response to oxidative stress"/>
    <property type="evidence" value="ECO:0007669"/>
    <property type="project" value="TreeGrafter"/>
</dbReference>
<dbReference type="CDD" id="cd03017">
    <property type="entry name" value="PRX_BCP"/>
    <property type="match status" value="1"/>
</dbReference>
<dbReference type="FunFam" id="3.40.30.10:FF:000007">
    <property type="entry name" value="Thioredoxin-dependent thiol peroxidase"/>
    <property type="match status" value="1"/>
</dbReference>
<dbReference type="Gene3D" id="3.40.30.10">
    <property type="entry name" value="Glutaredoxin"/>
    <property type="match status" value="1"/>
</dbReference>
<dbReference type="InterPro" id="IPR000866">
    <property type="entry name" value="AhpC/TSA"/>
</dbReference>
<dbReference type="InterPro" id="IPR024706">
    <property type="entry name" value="Peroxiredoxin_AhpC-typ"/>
</dbReference>
<dbReference type="InterPro" id="IPR050924">
    <property type="entry name" value="Peroxiredoxin_BCP/PrxQ"/>
</dbReference>
<dbReference type="InterPro" id="IPR036249">
    <property type="entry name" value="Thioredoxin-like_sf"/>
</dbReference>
<dbReference type="InterPro" id="IPR013766">
    <property type="entry name" value="Thioredoxin_domain"/>
</dbReference>
<dbReference type="NCBIfam" id="NF006960">
    <property type="entry name" value="PRK09437.1"/>
    <property type="match status" value="1"/>
</dbReference>
<dbReference type="PANTHER" id="PTHR42801:SF4">
    <property type="entry name" value="AHPC_TSA FAMILY PROTEIN"/>
    <property type="match status" value="1"/>
</dbReference>
<dbReference type="PANTHER" id="PTHR42801">
    <property type="entry name" value="THIOREDOXIN-DEPENDENT PEROXIDE REDUCTASE"/>
    <property type="match status" value="1"/>
</dbReference>
<dbReference type="Pfam" id="PF00578">
    <property type="entry name" value="AhpC-TSA"/>
    <property type="match status" value="1"/>
</dbReference>
<dbReference type="PIRSF" id="PIRSF000239">
    <property type="entry name" value="AHPC"/>
    <property type="match status" value="1"/>
</dbReference>
<dbReference type="SUPFAM" id="SSF52833">
    <property type="entry name" value="Thioredoxin-like"/>
    <property type="match status" value="1"/>
</dbReference>
<dbReference type="PROSITE" id="PS51352">
    <property type="entry name" value="THIOREDOXIN_2"/>
    <property type="match status" value="1"/>
</dbReference>
<organism>
    <name type="scientific">Escherichia coli O6:H1 (strain CFT073 / ATCC 700928 / UPEC)</name>
    <dbReference type="NCBI Taxonomy" id="199310"/>
    <lineage>
        <taxon>Bacteria</taxon>
        <taxon>Pseudomonadati</taxon>
        <taxon>Pseudomonadota</taxon>
        <taxon>Gammaproteobacteria</taxon>
        <taxon>Enterobacterales</taxon>
        <taxon>Enterobacteriaceae</taxon>
        <taxon>Escherichia</taxon>
    </lineage>
</organism>
<accession>P0AE53</accession>
<accession>P23480</accession>
<reference key="1">
    <citation type="journal article" date="2002" name="Proc. Natl. Acad. Sci. U.S.A.">
        <title>Extensive mosaic structure revealed by the complete genome sequence of uropathogenic Escherichia coli.</title>
        <authorList>
            <person name="Welch R.A."/>
            <person name="Burland V."/>
            <person name="Plunkett G. III"/>
            <person name="Redford P."/>
            <person name="Roesch P."/>
            <person name="Rasko D."/>
            <person name="Buckles E.L."/>
            <person name="Liou S.-R."/>
            <person name="Boutin A."/>
            <person name="Hackett J."/>
            <person name="Stroud D."/>
            <person name="Mayhew G.F."/>
            <person name="Rose D.J."/>
            <person name="Zhou S."/>
            <person name="Schwartz D.C."/>
            <person name="Perna N.T."/>
            <person name="Mobley H.L.T."/>
            <person name="Donnenberg M.S."/>
            <person name="Blattner F.R."/>
        </authorList>
    </citation>
    <scope>NUCLEOTIDE SEQUENCE [LARGE SCALE GENOMIC DNA]</scope>
    <source>
        <strain>CFT073 / ATCC 700928 / UPEC</strain>
    </source>
</reference>
<sequence>MNPLKAGDIAPKFSLPDQDGEQVNLTDFQGQRVLVYFYPKAMTPGCTVQACGLRDNMDELKKAGVDVLGISTDKPEKLSRFAEKELLNFTLLSDEDHQVCEQFGVWGEKSFMGKTYDGIHRISFLIDADGKIEHVFDDFKTSNHHDVVLNWLKEHA</sequence>
<gene>
    <name type="primary">bcp</name>
    <name type="ordered locus">c3008</name>
</gene>
<keyword id="KW-0049">Antioxidant</keyword>
<keyword id="KW-1015">Disulfide bond</keyword>
<keyword id="KW-0560">Oxidoreductase</keyword>
<keyword id="KW-0575">Peroxidase</keyword>
<keyword id="KW-0676">Redox-active center</keyword>
<keyword id="KW-1185">Reference proteome</keyword>
<proteinExistence type="inferred from homology"/>
<name>BCP_ECOL6</name>
<protein>
    <recommendedName>
        <fullName>Putative peroxiredoxin bcp</fullName>
        <ecNumber evidence="1">1.11.1.24</ecNumber>
    </recommendedName>
    <alternativeName>
        <fullName>Bacterioferritin comigratory protein</fullName>
    </alternativeName>
    <alternativeName>
        <fullName>Thioredoxin peroxidase</fullName>
    </alternativeName>
    <alternativeName>
        <fullName evidence="3">Thioredoxin-dependent peroxiredoxin Bcp</fullName>
    </alternativeName>
</protein>